<evidence type="ECO:0000255" key="1">
    <source>
        <dbReference type="HAMAP-Rule" id="MF_00054"/>
    </source>
</evidence>
<accession>Q1QN33</accession>
<sequence>MPRQHAIEDYRNFGIMAHIDAGKTTTTERILYYTGKSHKIGETHEGAATMDWMAQEQERGITITSAATTAFWNGKRLNIIDTPGHVDFTIEVERSLRVLDGAVCVLDSNQGVEPQTETVWRQGDKYKVPRIVFCNKMDKTGADFYKCLADIVDRLGARPVAVQLPIGAESAFKGMVDLVRMKALVWNIDSAGAMYDIEEIPADLADKAREYREKLVEAAVELDDNAMAAYLDGTEPDEATLKNLIRKGVITGAFYPVLCGTAFKNKGVQPLLDAVVDFLPSPLDVPAIKGTDDKGNEILRHADDKEPMSLLAFKIMDDPFVGTITFCRIYSGILQSGTGVVNSTREKKERIGRMLLMHANNREDIKEAYAGDIVALAGLKEARTGDTLCDPAHPVILEKMEFPDPVIEIAIEPKSKADQEKLGVALAKLAAEDPSFRVSTDQESGQTILKGMGELHLDIKVDILRRTYKVDANIGAPQVAFRERVTKRVEHSYTHKKQTGGTGQFAAVTLIVEPSEPGKGYEFESKIVGGAVPKEYIPGVEKGIESVLGSGVVAGFPVVDVKVQLIDGKFHDVDSSALAFEIATRACFREALQKGKSVLLEPIMKVEVVTPEDYTGSVIGDLNSRRGQIQGQDMRGNANVINAMVPLMNMFGYVNNLRSMSQGRATFTMQFDHYAEAPANVSAEVQKKFA</sequence>
<feature type="chain" id="PRO_0000263477" description="Elongation factor G">
    <location>
        <begin position="1"/>
        <end position="690"/>
    </location>
</feature>
<feature type="domain" description="tr-type G">
    <location>
        <begin position="8"/>
        <end position="283"/>
    </location>
</feature>
<feature type="binding site" evidence="1">
    <location>
        <begin position="17"/>
        <end position="24"/>
    </location>
    <ligand>
        <name>GTP</name>
        <dbReference type="ChEBI" id="CHEBI:37565"/>
    </ligand>
</feature>
<feature type="binding site" evidence="1">
    <location>
        <begin position="81"/>
        <end position="85"/>
    </location>
    <ligand>
        <name>GTP</name>
        <dbReference type="ChEBI" id="CHEBI:37565"/>
    </ligand>
</feature>
<feature type="binding site" evidence="1">
    <location>
        <begin position="135"/>
        <end position="138"/>
    </location>
    <ligand>
        <name>GTP</name>
        <dbReference type="ChEBI" id="CHEBI:37565"/>
    </ligand>
</feature>
<reference key="1">
    <citation type="submission" date="2006-03" db="EMBL/GenBank/DDBJ databases">
        <title>Complete sequence of chromosome of Nitrobacter hamburgensis X14.</title>
        <authorList>
            <consortium name="US DOE Joint Genome Institute"/>
            <person name="Copeland A."/>
            <person name="Lucas S."/>
            <person name="Lapidus A."/>
            <person name="Barry K."/>
            <person name="Detter J.C."/>
            <person name="Glavina del Rio T."/>
            <person name="Hammon N."/>
            <person name="Israni S."/>
            <person name="Dalin E."/>
            <person name="Tice H."/>
            <person name="Pitluck S."/>
            <person name="Chain P."/>
            <person name="Malfatti S."/>
            <person name="Shin M."/>
            <person name="Vergez L."/>
            <person name="Schmutz J."/>
            <person name="Larimer F."/>
            <person name="Land M."/>
            <person name="Hauser L."/>
            <person name="Kyrpides N."/>
            <person name="Ivanova N."/>
            <person name="Ward B."/>
            <person name="Arp D."/>
            <person name="Klotz M."/>
            <person name="Stein L."/>
            <person name="O'Mullan G."/>
            <person name="Starkenburg S."/>
            <person name="Sayavedra L."/>
            <person name="Poret-Peterson A.T."/>
            <person name="Gentry M.E."/>
            <person name="Bruce D."/>
            <person name="Richardson P."/>
        </authorList>
    </citation>
    <scope>NUCLEOTIDE SEQUENCE [LARGE SCALE GENOMIC DNA]</scope>
    <source>
        <strain>DSM 10229 / NCIMB 13809 / X14</strain>
    </source>
</reference>
<protein>
    <recommendedName>
        <fullName evidence="1">Elongation factor G</fullName>
        <shortName evidence="1">EF-G</shortName>
    </recommendedName>
</protein>
<proteinExistence type="inferred from homology"/>
<organism>
    <name type="scientific">Nitrobacter hamburgensis (strain DSM 10229 / NCIMB 13809 / X14)</name>
    <dbReference type="NCBI Taxonomy" id="323097"/>
    <lineage>
        <taxon>Bacteria</taxon>
        <taxon>Pseudomonadati</taxon>
        <taxon>Pseudomonadota</taxon>
        <taxon>Alphaproteobacteria</taxon>
        <taxon>Hyphomicrobiales</taxon>
        <taxon>Nitrobacteraceae</taxon>
        <taxon>Nitrobacter</taxon>
    </lineage>
</organism>
<comment type="function">
    <text evidence="1">Catalyzes the GTP-dependent ribosomal translocation step during translation elongation. During this step, the ribosome changes from the pre-translocational (PRE) to the post-translocational (POST) state as the newly formed A-site-bound peptidyl-tRNA and P-site-bound deacylated tRNA move to the P and E sites, respectively. Catalyzes the coordinated movement of the two tRNA molecules, the mRNA and conformational changes in the ribosome.</text>
</comment>
<comment type="subcellular location">
    <subcellularLocation>
        <location evidence="1">Cytoplasm</location>
    </subcellularLocation>
</comment>
<comment type="similarity">
    <text evidence="1">Belongs to the TRAFAC class translation factor GTPase superfamily. Classic translation factor GTPase family. EF-G/EF-2 subfamily.</text>
</comment>
<keyword id="KW-0963">Cytoplasm</keyword>
<keyword id="KW-0251">Elongation factor</keyword>
<keyword id="KW-0342">GTP-binding</keyword>
<keyword id="KW-0547">Nucleotide-binding</keyword>
<keyword id="KW-0648">Protein biosynthesis</keyword>
<keyword id="KW-1185">Reference proteome</keyword>
<gene>
    <name evidence="1" type="primary">fusA</name>
    <name type="ordered locus">Nham_1542</name>
</gene>
<dbReference type="EMBL" id="CP000319">
    <property type="protein sequence ID" value="ABE62364.1"/>
    <property type="molecule type" value="Genomic_DNA"/>
</dbReference>
<dbReference type="RefSeq" id="WP_011510052.1">
    <property type="nucleotide sequence ID" value="NC_007964.1"/>
</dbReference>
<dbReference type="SMR" id="Q1QN33"/>
<dbReference type="STRING" id="323097.Nham_1542"/>
<dbReference type="KEGG" id="nha:Nham_1542"/>
<dbReference type="eggNOG" id="COG0480">
    <property type="taxonomic scope" value="Bacteria"/>
</dbReference>
<dbReference type="HOGENOM" id="CLU_002794_4_1_5"/>
<dbReference type="OrthoDB" id="9802948at2"/>
<dbReference type="Proteomes" id="UP000001953">
    <property type="component" value="Chromosome"/>
</dbReference>
<dbReference type="GO" id="GO:0005737">
    <property type="term" value="C:cytoplasm"/>
    <property type="evidence" value="ECO:0007669"/>
    <property type="project" value="UniProtKB-SubCell"/>
</dbReference>
<dbReference type="GO" id="GO:0005525">
    <property type="term" value="F:GTP binding"/>
    <property type="evidence" value="ECO:0007669"/>
    <property type="project" value="UniProtKB-UniRule"/>
</dbReference>
<dbReference type="GO" id="GO:0003924">
    <property type="term" value="F:GTPase activity"/>
    <property type="evidence" value="ECO:0007669"/>
    <property type="project" value="InterPro"/>
</dbReference>
<dbReference type="GO" id="GO:0097216">
    <property type="term" value="F:guanosine tetraphosphate binding"/>
    <property type="evidence" value="ECO:0007669"/>
    <property type="project" value="UniProtKB-ARBA"/>
</dbReference>
<dbReference type="GO" id="GO:0003746">
    <property type="term" value="F:translation elongation factor activity"/>
    <property type="evidence" value="ECO:0007669"/>
    <property type="project" value="UniProtKB-UniRule"/>
</dbReference>
<dbReference type="GO" id="GO:0032790">
    <property type="term" value="P:ribosome disassembly"/>
    <property type="evidence" value="ECO:0007669"/>
    <property type="project" value="TreeGrafter"/>
</dbReference>
<dbReference type="CDD" id="cd01886">
    <property type="entry name" value="EF-G"/>
    <property type="match status" value="1"/>
</dbReference>
<dbReference type="CDD" id="cd16262">
    <property type="entry name" value="EFG_III"/>
    <property type="match status" value="1"/>
</dbReference>
<dbReference type="CDD" id="cd01434">
    <property type="entry name" value="EFG_mtEFG1_IV"/>
    <property type="match status" value="1"/>
</dbReference>
<dbReference type="CDD" id="cd03713">
    <property type="entry name" value="EFG_mtEFG_C"/>
    <property type="match status" value="1"/>
</dbReference>
<dbReference type="CDD" id="cd04088">
    <property type="entry name" value="EFG_mtEFG_II"/>
    <property type="match status" value="1"/>
</dbReference>
<dbReference type="FunFam" id="2.40.30.10:FF:000006">
    <property type="entry name" value="Elongation factor G"/>
    <property type="match status" value="1"/>
</dbReference>
<dbReference type="FunFam" id="3.30.230.10:FF:000003">
    <property type="entry name" value="Elongation factor G"/>
    <property type="match status" value="1"/>
</dbReference>
<dbReference type="FunFam" id="3.30.70.240:FF:000001">
    <property type="entry name" value="Elongation factor G"/>
    <property type="match status" value="1"/>
</dbReference>
<dbReference type="FunFam" id="3.30.70.870:FF:000001">
    <property type="entry name" value="Elongation factor G"/>
    <property type="match status" value="1"/>
</dbReference>
<dbReference type="FunFam" id="3.40.50.300:FF:000029">
    <property type="entry name" value="Elongation factor G"/>
    <property type="match status" value="1"/>
</dbReference>
<dbReference type="Gene3D" id="3.30.230.10">
    <property type="match status" value="1"/>
</dbReference>
<dbReference type="Gene3D" id="3.30.70.240">
    <property type="match status" value="1"/>
</dbReference>
<dbReference type="Gene3D" id="3.30.70.870">
    <property type="entry name" value="Elongation Factor G (Translational Gtpase), domain 3"/>
    <property type="match status" value="1"/>
</dbReference>
<dbReference type="Gene3D" id="3.40.50.300">
    <property type="entry name" value="P-loop containing nucleotide triphosphate hydrolases"/>
    <property type="match status" value="1"/>
</dbReference>
<dbReference type="Gene3D" id="2.40.30.10">
    <property type="entry name" value="Translation factors"/>
    <property type="match status" value="1"/>
</dbReference>
<dbReference type="HAMAP" id="MF_00054_B">
    <property type="entry name" value="EF_G_EF_2_B"/>
    <property type="match status" value="1"/>
</dbReference>
<dbReference type="InterPro" id="IPR041095">
    <property type="entry name" value="EFG_II"/>
</dbReference>
<dbReference type="InterPro" id="IPR009022">
    <property type="entry name" value="EFG_III"/>
</dbReference>
<dbReference type="InterPro" id="IPR035647">
    <property type="entry name" value="EFG_III/V"/>
</dbReference>
<dbReference type="InterPro" id="IPR047872">
    <property type="entry name" value="EFG_IV"/>
</dbReference>
<dbReference type="InterPro" id="IPR035649">
    <property type="entry name" value="EFG_V"/>
</dbReference>
<dbReference type="InterPro" id="IPR000640">
    <property type="entry name" value="EFG_V-like"/>
</dbReference>
<dbReference type="InterPro" id="IPR004161">
    <property type="entry name" value="EFTu-like_2"/>
</dbReference>
<dbReference type="InterPro" id="IPR031157">
    <property type="entry name" value="G_TR_CS"/>
</dbReference>
<dbReference type="InterPro" id="IPR027417">
    <property type="entry name" value="P-loop_NTPase"/>
</dbReference>
<dbReference type="InterPro" id="IPR020568">
    <property type="entry name" value="Ribosomal_Su5_D2-typ_SF"/>
</dbReference>
<dbReference type="InterPro" id="IPR014721">
    <property type="entry name" value="Ribsml_uS5_D2-typ_fold_subgr"/>
</dbReference>
<dbReference type="InterPro" id="IPR005225">
    <property type="entry name" value="Small_GTP-bd"/>
</dbReference>
<dbReference type="InterPro" id="IPR000795">
    <property type="entry name" value="T_Tr_GTP-bd_dom"/>
</dbReference>
<dbReference type="InterPro" id="IPR009000">
    <property type="entry name" value="Transl_B-barrel_sf"/>
</dbReference>
<dbReference type="InterPro" id="IPR004540">
    <property type="entry name" value="Transl_elong_EFG/EF2"/>
</dbReference>
<dbReference type="InterPro" id="IPR005517">
    <property type="entry name" value="Transl_elong_EFG/EF2_IV"/>
</dbReference>
<dbReference type="NCBIfam" id="TIGR00484">
    <property type="entry name" value="EF-G"/>
    <property type="match status" value="1"/>
</dbReference>
<dbReference type="NCBIfam" id="NF009379">
    <property type="entry name" value="PRK12740.1-3"/>
    <property type="match status" value="1"/>
</dbReference>
<dbReference type="NCBIfam" id="NF009381">
    <property type="entry name" value="PRK12740.1-5"/>
    <property type="match status" value="1"/>
</dbReference>
<dbReference type="NCBIfam" id="TIGR00231">
    <property type="entry name" value="small_GTP"/>
    <property type="match status" value="1"/>
</dbReference>
<dbReference type="PANTHER" id="PTHR43261:SF1">
    <property type="entry name" value="RIBOSOME-RELEASING FACTOR 2, MITOCHONDRIAL"/>
    <property type="match status" value="1"/>
</dbReference>
<dbReference type="PANTHER" id="PTHR43261">
    <property type="entry name" value="TRANSLATION ELONGATION FACTOR G-RELATED"/>
    <property type="match status" value="1"/>
</dbReference>
<dbReference type="Pfam" id="PF00679">
    <property type="entry name" value="EFG_C"/>
    <property type="match status" value="1"/>
</dbReference>
<dbReference type="Pfam" id="PF14492">
    <property type="entry name" value="EFG_III"/>
    <property type="match status" value="1"/>
</dbReference>
<dbReference type="Pfam" id="PF03764">
    <property type="entry name" value="EFG_IV"/>
    <property type="match status" value="1"/>
</dbReference>
<dbReference type="Pfam" id="PF00009">
    <property type="entry name" value="GTP_EFTU"/>
    <property type="match status" value="1"/>
</dbReference>
<dbReference type="Pfam" id="PF03144">
    <property type="entry name" value="GTP_EFTU_D2"/>
    <property type="match status" value="1"/>
</dbReference>
<dbReference type="PRINTS" id="PR00315">
    <property type="entry name" value="ELONGATNFCT"/>
</dbReference>
<dbReference type="SMART" id="SM00838">
    <property type="entry name" value="EFG_C"/>
    <property type="match status" value="1"/>
</dbReference>
<dbReference type="SMART" id="SM00889">
    <property type="entry name" value="EFG_IV"/>
    <property type="match status" value="1"/>
</dbReference>
<dbReference type="SUPFAM" id="SSF54980">
    <property type="entry name" value="EF-G C-terminal domain-like"/>
    <property type="match status" value="2"/>
</dbReference>
<dbReference type="SUPFAM" id="SSF52540">
    <property type="entry name" value="P-loop containing nucleoside triphosphate hydrolases"/>
    <property type="match status" value="1"/>
</dbReference>
<dbReference type="SUPFAM" id="SSF54211">
    <property type="entry name" value="Ribosomal protein S5 domain 2-like"/>
    <property type="match status" value="1"/>
</dbReference>
<dbReference type="SUPFAM" id="SSF50447">
    <property type="entry name" value="Translation proteins"/>
    <property type="match status" value="1"/>
</dbReference>
<dbReference type="PROSITE" id="PS00301">
    <property type="entry name" value="G_TR_1"/>
    <property type="match status" value="1"/>
</dbReference>
<dbReference type="PROSITE" id="PS51722">
    <property type="entry name" value="G_TR_2"/>
    <property type="match status" value="1"/>
</dbReference>
<name>EFG_NITHX</name>